<accession>Q9HKT1</accession>
<evidence type="ECO:0000250" key="1"/>
<evidence type="ECO:0000255" key="2">
    <source>
        <dbReference type="PROSITE-ProRule" id="PRU01067"/>
    </source>
</evidence>
<evidence type="ECO:0000269" key="3">
    <source>
    </source>
</evidence>
<evidence type="ECO:0000269" key="4">
    <source>
    </source>
</evidence>
<evidence type="ECO:0000269" key="5">
    <source>
    </source>
</evidence>
<evidence type="ECO:0000269" key="6">
    <source>
    </source>
</evidence>
<evidence type="ECO:0000305" key="7"/>
<evidence type="ECO:0007744" key="8">
    <source>
        <dbReference type="PDB" id="2ARS"/>
    </source>
</evidence>
<evidence type="ECO:0007744" key="9">
    <source>
        <dbReference type="PDB" id="2ART"/>
    </source>
</evidence>
<evidence type="ECO:0007744" key="10">
    <source>
        <dbReference type="PDB" id="2ARU"/>
    </source>
</evidence>
<evidence type="ECO:0007744" key="11">
    <source>
        <dbReference type="PDB" id="2C7I"/>
    </source>
</evidence>
<evidence type="ECO:0007744" key="12">
    <source>
        <dbReference type="PDB" id="2C8M"/>
    </source>
</evidence>
<evidence type="ECO:0007829" key="13">
    <source>
        <dbReference type="PDB" id="2ARS"/>
    </source>
</evidence>
<evidence type="ECO:0007829" key="14">
    <source>
        <dbReference type="PDB" id="2C8M"/>
    </source>
</evidence>
<evidence type="ECO:0007829" key="15">
    <source>
        <dbReference type="PDB" id="3R07"/>
    </source>
</evidence>
<proteinExistence type="evidence at protein level"/>
<reference key="1">
    <citation type="journal article" date="2000" name="Nature">
        <title>The genome sequence of the thermoacidophilic scavenger Thermoplasma acidophilum.</title>
        <authorList>
            <person name="Ruepp A."/>
            <person name="Graml W."/>
            <person name="Santos-Martinez M.-L."/>
            <person name="Koretke K.K."/>
            <person name="Volker C."/>
            <person name="Mewes H.-W."/>
            <person name="Frishman D."/>
            <person name="Stocker S."/>
            <person name="Lupas A.N."/>
            <person name="Baumeister W."/>
        </authorList>
    </citation>
    <scope>NUCLEOTIDE SEQUENCE [LARGE SCALE GENOMIC DNA]</scope>
    <source>
        <strain>ATCC 25905 / DSM 1728 / JCM 9062 / NBRC 15155 / AMRC-C165</strain>
    </source>
</reference>
<reference evidence="11 12" key="2">
    <citation type="journal article" date="2006" name="J. Mol. Biol.">
        <title>Structure of a putative lipoate protein ligase from Thermoplasma acidophilum and the mechanism of target selection for post-translational modification.</title>
        <authorList>
            <person name="McManus E."/>
            <person name="Luisi B.F."/>
            <person name="Perham R.N."/>
        </authorList>
    </citation>
    <scope>PROTEIN SEQUENCE OF 1-7</scope>
    <scope>X-RAY CRYSTALLOGRAPHY (1.89 ANGSTROMS) OF APOENZYME AND IN COMPLEX WITH LIPOIC ACID AND MAGNESIUM</scope>
    <scope>LACK OF FUNCTION AS A LIPOYL TRANSFERASE</scope>
    <scope>SUBUNIT</scope>
    <scope>MASS SPECTROMETRY</scope>
</reference>
<reference key="3">
    <citation type="journal article" date="2009" name="FEBS J.">
        <title>A unique lipoylation system in the Archaea. Lipoylation in Thermoplasma acidophilum requires two proteins.</title>
        <authorList>
            <person name="Posner M.G."/>
            <person name="Upadhyay A."/>
            <person name="Bagby S."/>
            <person name="Hough D.W."/>
            <person name="Danson M.J."/>
        </authorList>
    </citation>
    <scope>FUNCTION</scope>
    <scope>CATALYTIC ACTIVITY</scope>
    <scope>SUBUNIT</scope>
    <scope>INTERACTION WITH TA0513</scope>
    <scope>PATHWAY</scope>
    <source>
        <strain>ATCC 25905 / DSM 1728 / JCM 9062 / NBRC 15155 / AMRC-C165</strain>
    </source>
</reference>
<reference key="4">
    <citation type="journal article" date="2009" name="J. Biol. Chem.">
        <title>The Thermoplasma acidophilum LplA-LplB complex defines a new class of bipartite lipoate-protein ligases.</title>
        <authorList>
            <person name="Christensen Q.H."/>
            <person name="Cronan J.E."/>
        </authorList>
    </citation>
    <scope>FUNCTION</scope>
    <scope>CATALYTIC ACTIVITY</scope>
    <scope>SUBSTRATE SPECIFICITY</scope>
    <scope>SUBUNIT</scope>
    <scope>INTERACTION WITH TA0513</scope>
    <scope>PATHWAY</scope>
    <source>
        <strain>ATCC 25905 / DSM 1728 / JCM 9062 / NBRC 15155 / AMRC-C165</strain>
    </source>
</reference>
<reference evidence="8 9 10" key="5">
    <citation type="journal article" date="2005" name="J. Biol. Chem.">
        <title>Crystal structure of lipoate-protein ligase A bound with the activated intermediate. Insights into interaction with lipoyl domains.</title>
        <authorList>
            <person name="Kim D.J."/>
            <person name="Kim K.H."/>
            <person name="Lee H.H."/>
            <person name="Lee S.J."/>
            <person name="Ha J.Y."/>
            <person name="Yoon H.J."/>
            <person name="Suh S.W."/>
        </authorList>
    </citation>
    <scope>X-RAY CRYSTALLOGRAPHY (2.04 ANGSTROMS) OF APOENZYME AND IN COMPLEX WITH SUBSTRATES AND MAGNESIUM</scope>
    <scope>FUNCTION IN LIPOATE ACTIVATION</scope>
</reference>
<sequence length="262" mass="29872">MEGRLLLLETPGNTRMSLAYDEAIYRSFQYGDKPILRFYRHDRSVIIGYFQVAEEEVDLDYMKKNGIMLARRYTGGGAVYHDLGDLNFSVVRSSDDMDITSMFRTMNEAVVNSLRILGLDARPGELNDVSIPVNKKTDIMAGEKKIMGAAGAMRKGAKLWHAAMLVHTDLDMLSAVLKVPDEKFRDKIAKSTRERVANVTDFVDVSIDEVRNALIRGFSETLHIDFREDTITEKEESLARELFDKKYSTEEWNMGLLRKEVV</sequence>
<feature type="chain" id="PRO_0000209571" description="Lipoate-protein ligase A subunit 1">
    <location>
        <begin position="1"/>
        <end position="262"/>
    </location>
</feature>
<feature type="domain" description="BPL/LPL catalytic" evidence="2">
    <location>
        <begin position="30"/>
        <end position="226"/>
    </location>
</feature>
<feature type="binding site" evidence="3 10">
    <location>
        <position position="72"/>
    </location>
    <ligand>
        <name>ATP</name>
        <dbReference type="ChEBI" id="CHEBI:30616"/>
    </ligand>
</feature>
<feature type="binding site" evidence="3 9 10">
    <location>
        <position position="77"/>
    </location>
    <ligand>
        <name>ATP</name>
        <dbReference type="ChEBI" id="CHEBI:30616"/>
    </ligand>
</feature>
<feature type="binding site" evidence="3 9 10">
    <location>
        <position position="80"/>
    </location>
    <ligand>
        <name>ATP</name>
        <dbReference type="ChEBI" id="CHEBI:30616"/>
    </ligand>
</feature>
<feature type="binding site" evidence="3 9 10">
    <location>
        <position position="85"/>
    </location>
    <ligand>
        <name>ATP</name>
        <dbReference type="ChEBI" id="CHEBI:30616"/>
    </ligand>
</feature>
<feature type="binding site" evidence="3 9 10">
    <location>
        <position position="132"/>
    </location>
    <ligand>
        <name>ATP</name>
        <dbReference type="ChEBI" id="CHEBI:30616"/>
    </ligand>
</feature>
<feature type="binding site" evidence="3 9 10">
    <location>
        <position position="135"/>
    </location>
    <ligand>
        <name>ATP</name>
        <dbReference type="ChEBI" id="CHEBI:30616"/>
    </ligand>
</feature>
<feature type="binding site" evidence="3 4 8 9 10">
    <location>
        <position position="137"/>
    </location>
    <ligand>
        <name>Mg(2+)</name>
        <dbReference type="ChEBI" id="CHEBI:18420"/>
    </ligand>
</feature>
<feature type="binding site" evidence="3 4 8 9 10">
    <location>
        <position position="138"/>
    </location>
    <ligand>
        <name>Mg(2+)</name>
        <dbReference type="ChEBI" id="CHEBI:18420"/>
    </ligand>
</feature>
<feature type="binding site" evidence="3 4 9 12">
    <location>
        <position position="145"/>
    </location>
    <ligand>
        <name>(R)-lipoate</name>
        <dbReference type="ChEBI" id="CHEBI:83088"/>
    </ligand>
</feature>
<feature type="binding site" evidence="3 9 10">
    <location>
        <position position="145"/>
    </location>
    <ligand>
        <name>ATP</name>
        <dbReference type="ChEBI" id="CHEBI:30616"/>
    </ligand>
</feature>
<feature type="binding site" evidence="3 10">
    <location>
        <position position="149"/>
    </location>
    <ligand>
        <name>ATP</name>
        <dbReference type="ChEBI" id="CHEBI:30616"/>
    </ligand>
</feature>
<feature type="binding site" evidence="3 4 8 9 10">
    <location>
        <position position="149"/>
    </location>
    <ligand>
        <name>Mg(2+)</name>
        <dbReference type="ChEBI" id="CHEBI:18420"/>
    </ligand>
</feature>
<feature type="binding site" evidence="3 9 10">
    <location>
        <position position="163"/>
    </location>
    <ligand>
        <name>ATP</name>
        <dbReference type="ChEBI" id="CHEBI:30616"/>
    </ligand>
</feature>
<feature type="strand" evidence="14">
    <location>
        <begin position="2"/>
        <end position="6"/>
    </location>
</feature>
<feature type="helix" evidence="14">
    <location>
        <begin position="14"/>
        <end position="27"/>
    </location>
</feature>
<feature type="strand" evidence="14">
    <location>
        <begin position="35"/>
        <end position="39"/>
    </location>
</feature>
<feature type="strand" evidence="14">
    <location>
        <begin position="42"/>
        <end position="47"/>
    </location>
</feature>
<feature type="helix" evidence="14">
    <location>
        <begin position="53"/>
        <end position="56"/>
    </location>
</feature>
<feature type="helix" evidence="14">
    <location>
        <begin position="59"/>
        <end position="64"/>
    </location>
</feature>
<feature type="strand" evidence="14">
    <location>
        <begin position="68"/>
        <end position="71"/>
    </location>
</feature>
<feature type="strand" evidence="14">
    <location>
        <begin position="79"/>
        <end position="81"/>
    </location>
</feature>
<feature type="strand" evidence="14">
    <location>
        <begin position="85"/>
        <end position="93"/>
    </location>
</feature>
<feature type="helix" evidence="14">
    <location>
        <begin position="99"/>
        <end position="116"/>
    </location>
</feature>
<feature type="strand" evidence="14">
    <location>
        <begin position="131"/>
        <end position="135"/>
    </location>
</feature>
<feature type="strand" evidence="14">
    <location>
        <begin position="138"/>
        <end position="141"/>
    </location>
</feature>
<feature type="strand" evidence="14">
    <location>
        <begin position="144"/>
        <end position="154"/>
    </location>
</feature>
<feature type="strand" evidence="14">
    <location>
        <begin position="157"/>
        <end position="167"/>
    </location>
</feature>
<feature type="helix" evidence="14">
    <location>
        <begin position="170"/>
        <end position="176"/>
    </location>
</feature>
<feature type="helix" evidence="15">
    <location>
        <begin position="182"/>
        <end position="184"/>
    </location>
</feature>
<feature type="helix" evidence="13">
    <location>
        <begin position="193"/>
        <end position="195"/>
    </location>
</feature>
<feature type="helix" evidence="14">
    <location>
        <begin position="199"/>
        <end position="201"/>
    </location>
</feature>
<feature type="helix" evidence="14">
    <location>
        <begin position="207"/>
        <end position="222"/>
    </location>
</feature>
<feature type="strand" evidence="14">
    <location>
        <begin position="225"/>
        <end position="228"/>
    </location>
</feature>
<feature type="helix" evidence="14">
    <location>
        <begin position="233"/>
        <end position="245"/>
    </location>
</feature>
<feature type="turn" evidence="14">
    <location>
        <begin position="246"/>
        <end position="248"/>
    </location>
</feature>
<feature type="helix" evidence="14">
    <location>
        <begin position="250"/>
        <end position="254"/>
    </location>
</feature>
<comment type="function">
    <text evidence="3 5 6">Part of a lipoate-protein ligase complex that catalyzes both the ATP-dependent activation of exogenously supplied lipoate to lipoyl-AMP and the transfer of the activated lipoyl onto the lipoyl domains of lipoate-dependent enzymes. Can also use octanoate as substrate.</text>
</comment>
<comment type="catalytic activity">
    <reaction evidence="5 6">
        <text>L-lysyl-[lipoyl-carrier protein] + (R)-lipoate + ATP = N(6)-[(R)-lipoyl]-L-lysyl-[lipoyl-carrier protein] + AMP + diphosphate + H(+)</text>
        <dbReference type="Rhea" id="RHEA:49288"/>
        <dbReference type="Rhea" id="RHEA-COMP:10500"/>
        <dbReference type="Rhea" id="RHEA-COMP:10502"/>
        <dbReference type="ChEBI" id="CHEBI:15378"/>
        <dbReference type="ChEBI" id="CHEBI:29969"/>
        <dbReference type="ChEBI" id="CHEBI:30616"/>
        <dbReference type="ChEBI" id="CHEBI:33019"/>
        <dbReference type="ChEBI" id="CHEBI:83088"/>
        <dbReference type="ChEBI" id="CHEBI:83099"/>
        <dbReference type="ChEBI" id="CHEBI:456215"/>
        <dbReference type="EC" id="6.3.1.20"/>
    </reaction>
</comment>
<comment type="pathway">
    <text>Protein modification; protein lipoylation via exogenous pathway; protein N(6)-(lipoyl)lysine from lipoate: step 1/2.</text>
</comment>
<comment type="pathway">
    <text>Protein modification; protein lipoylation via exogenous pathway; protein N(6)-(lipoyl)lysine from lipoate: step 2/2.</text>
</comment>
<comment type="subunit">
    <text evidence="3 4 5 6">Heterodimer composed of LplA and LplB.</text>
</comment>
<comment type="subcellular location">
    <subcellularLocation>
        <location evidence="1">Cytoplasm</location>
    </subcellularLocation>
</comment>
<comment type="mass spectrometry" mass="29872.0" error="3.0" method="Electrospray" evidence="4"/>
<comment type="miscellaneous">
    <text>In contrast to E.coli, where the lipoate-protein ligase is encoded by a single gene product (LplA) with a large N-terminal domain and a small C-terminal domain, the same activity in T.acidophilum is dependent on two separate proteins, corresponding to the two domains of E.coli LplA, respectively.</text>
</comment>
<comment type="similarity">
    <text evidence="7">Belongs to the LplA family.</text>
</comment>
<protein>
    <recommendedName>
        <fullName>Lipoate-protein ligase A subunit 1</fullName>
        <ecNumber evidence="5 6">6.3.1.20</ecNumber>
    </recommendedName>
    <alternativeName>
        <fullName>Lipoate--protein ligase subunit 1</fullName>
    </alternativeName>
</protein>
<dbReference type="EC" id="6.3.1.20" evidence="5 6"/>
<dbReference type="EMBL" id="AL445064">
    <property type="protein sequence ID" value="CAC11654.1"/>
    <property type="molecule type" value="Genomic_DNA"/>
</dbReference>
<dbReference type="RefSeq" id="WP_010900939.1">
    <property type="nucleotide sequence ID" value="NC_002578.1"/>
</dbReference>
<dbReference type="PDB" id="2ARS">
    <property type="method" value="X-ray"/>
    <property type="resolution" value="2.04 A"/>
    <property type="chains" value="A=1-262"/>
</dbReference>
<dbReference type="PDB" id="2ART">
    <property type="method" value="X-ray"/>
    <property type="resolution" value="2.40 A"/>
    <property type="chains" value="A=1-262"/>
</dbReference>
<dbReference type="PDB" id="2ARU">
    <property type="method" value="X-ray"/>
    <property type="resolution" value="2.50 A"/>
    <property type="chains" value="A=1-262"/>
</dbReference>
<dbReference type="PDB" id="2C7I">
    <property type="method" value="X-ray"/>
    <property type="resolution" value="2.10 A"/>
    <property type="chains" value="A/B/C/D=1-262"/>
</dbReference>
<dbReference type="PDB" id="2C8M">
    <property type="method" value="X-ray"/>
    <property type="resolution" value="1.89 A"/>
    <property type="chains" value="A/B/C/D=1-262"/>
</dbReference>
<dbReference type="PDB" id="3R07">
    <property type="method" value="X-ray"/>
    <property type="resolution" value="2.70 A"/>
    <property type="chains" value="A=1-262"/>
</dbReference>
<dbReference type="PDBsum" id="2ARS"/>
<dbReference type="PDBsum" id="2ART"/>
<dbReference type="PDBsum" id="2ARU"/>
<dbReference type="PDBsum" id="2C7I"/>
<dbReference type="PDBsum" id="2C8M"/>
<dbReference type="PDBsum" id="3R07"/>
<dbReference type="SMR" id="Q9HKT1"/>
<dbReference type="FunCoup" id="Q9HKT1">
    <property type="interactions" value="83"/>
</dbReference>
<dbReference type="IntAct" id="Q9HKT1">
    <property type="interactions" value="1"/>
</dbReference>
<dbReference type="MINT" id="Q9HKT1"/>
<dbReference type="STRING" id="273075.gene:9571732"/>
<dbReference type="PaxDb" id="273075-Ta0514"/>
<dbReference type="EnsemblBacteria" id="CAC11654">
    <property type="protein sequence ID" value="CAC11654"/>
    <property type="gene ID" value="CAC11654"/>
</dbReference>
<dbReference type="KEGG" id="tac:Ta0514"/>
<dbReference type="eggNOG" id="arCOG01939">
    <property type="taxonomic scope" value="Archaea"/>
</dbReference>
<dbReference type="HOGENOM" id="CLU_022986_0_0_2"/>
<dbReference type="InParanoid" id="Q9HKT1"/>
<dbReference type="OrthoDB" id="43646at2157"/>
<dbReference type="BioCyc" id="MetaCyc:MONOMER-15675"/>
<dbReference type="BRENDA" id="6.3.1.20">
    <property type="organism ID" value="6324"/>
</dbReference>
<dbReference type="UniPathway" id="UPA00537">
    <property type="reaction ID" value="UER00594"/>
</dbReference>
<dbReference type="UniPathway" id="UPA00537">
    <property type="reaction ID" value="UER00595"/>
</dbReference>
<dbReference type="EvolutionaryTrace" id="Q9HKT1"/>
<dbReference type="Proteomes" id="UP000001024">
    <property type="component" value="Chromosome"/>
</dbReference>
<dbReference type="GO" id="GO:0005737">
    <property type="term" value="C:cytoplasm"/>
    <property type="evidence" value="ECO:0007669"/>
    <property type="project" value="UniProtKB-SubCell"/>
</dbReference>
<dbReference type="GO" id="GO:0032991">
    <property type="term" value="C:protein-containing complex"/>
    <property type="evidence" value="ECO:0000314"/>
    <property type="project" value="UniProtKB"/>
</dbReference>
<dbReference type="GO" id="GO:0005524">
    <property type="term" value="F:ATP binding"/>
    <property type="evidence" value="ECO:0007669"/>
    <property type="project" value="UniProtKB-KW"/>
</dbReference>
<dbReference type="GO" id="GO:0016979">
    <property type="term" value="F:lipoate-protein ligase activity"/>
    <property type="evidence" value="ECO:0007669"/>
    <property type="project" value="UniProtKB-EC"/>
</dbReference>
<dbReference type="GO" id="GO:0031405">
    <property type="term" value="F:lipoic acid binding"/>
    <property type="evidence" value="ECO:0000314"/>
    <property type="project" value="CAFA"/>
</dbReference>
<dbReference type="GO" id="GO:0046872">
    <property type="term" value="F:metal ion binding"/>
    <property type="evidence" value="ECO:0007669"/>
    <property type="project" value="UniProtKB-KW"/>
</dbReference>
<dbReference type="GO" id="GO:0009249">
    <property type="term" value="P:protein lipoylation"/>
    <property type="evidence" value="ECO:0000314"/>
    <property type="project" value="UniProtKB"/>
</dbReference>
<dbReference type="CDD" id="cd16443">
    <property type="entry name" value="LplA"/>
    <property type="match status" value="1"/>
</dbReference>
<dbReference type="DisProt" id="DP00096"/>
<dbReference type="FunFam" id="3.30.930.10:FF:000101">
    <property type="entry name" value="Lipoate-protein ligase A subunit 1"/>
    <property type="match status" value="1"/>
</dbReference>
<dbReference type="Gene3D" id="3.30.930.10">
    <property type="entry name" value="Bira Bifunctional Protein, Domain 2"/>
    <property type="match status" value="1"/>
</dbReference>
<dbReference type="InterPro" id="IPR045864">
    <property type="entry name" value="aa-tRNA-synth_II/BPL/LPL"/>
</dbReference>
<dbReference type="InterPro" id="IPR004143">
    <property type="entry name" value="BPL_LPL_catalytic"/>
</dbReference>
<dbReference type="InterPro" id="IPR050664">
    <property type="entry name" value="Octanoyltrans_LipM/LipL"/>
</dbReference>
<dbReference type="PANTHER" id="PTHR43679:SF2">
    <property type="entry name" value="OCTANOYL-[GCVH]:PROTEIN N-OCTANOYLTRANSFERASE"/>
    <property type="match status" value="1"/>
</dbReference>
<dbReference type="PANTHER" id="PTHR43679">
    <property type="entry name" value="OCTANOYLTRANSFERASE LIPM-RELATED"/>
    <property type="match status" value="1"/>
</dbReference>
<dbReference type="Pfam" id="PF21948">
    <property type="entry name" value="LplA-B_cat"/>
    <property type="match status" value="1"/>
</dbReference>
<dbReference type="SUPFAM" id="SSF55681">
    <property type="entry name" value="Class II aaRS and biotin synthetases"/>
    <property type="match status" value="1"/>
</dbReference>
<dbReference type="PROSITE" id="PS51733">
    <property type="entry name" value="BPL_LPL_CATALYTIC"/>
    <property type="match status" value="1"/>
</dbReference>
<organism>
    <name type="scientific">Thermoplasma acidophilum (strain ATCC 25905 / DSM 1728 / JCM 9062 / NBRC 15155 / AMRC-C165)</name>
    <dbReference type="NCBI Taxonomy" id="273075"/>
    <lineage>
        <taxon>Archaea</taxon>
        <taxon>Methanobacteriati</taxon>
        <taxon>Thermoplasmatota</taxon>
        <taxon>Thermoplasmata</taxon>
        <taxon>Thermoplasmatales</taxon>
        <taxon>Thermoplasmataceae</taxon>
        <taxon>Thermoplasma</taxon>
    </lineage>
</organism>
<name>LPLAN_THEAC</name>
<keyword id="KW-0002">3D-structure</keyword>
<keyword id="KW-0067">ATP-binding</keyword>
<keyword id="KW-0963">Cytoplasm</keyword>
<keyword id="KW-0903">Direct protein sequencing</keyword>
<keyword id="KW-0436">Ligase</keyword>
<keyword id="KW-0460">Magnesium</keyword>
<keyword id="KW-0479">Metal-binding</keyword>
<keyword id="KW-0547">Nucleotide-binding</keyword>
<keyword id="KW-1185">Reference proteome</keyword>
<gene>
    <name type="primary">lplA</name>
    <name type="ordered locus">Ta0514</name>
</gene>